<evidence type="ECO:0000255" key="1">
    <source>
        <dbReference type="HAMAP-Rule" id="MF_00197"/>
    </source>
</evidence>
<gene>
    <name evidence="1" type="primary">dapF</name>
    <name type="ordered locus">BT_0548</name>
</gene>
<dbReference type="EC" id="5.1.1.7" evidence="1"/>
<dbReference type="EMBL" id="AE015928">
    <property type="protein sequence ID" value="AAO75655.1"/>
    <property type="molecule type" value="Genomic_DNA"/>
</dbReference>
<dbReference type="RefSeq" id="NP_809461.1">
    <property type="nucleotide sequence ID" value="NC_004663.1"/>
</dbReference>
<dbReference type="RefSeq" id="WP_008765061.1">
    <property type="nucleotide sequence ID" value="NC_004663.1"/>
</dbReference>
<dbReference type="SMR" id="Q8AAB7"/>
<dbReference type="FunCoup" id="Q8AAB7">
    <property type="interactions" value="561"/>
</dbReference>
<dbReference type="STRING" id="226186.BT_0548"/>
<dbReference type="PaxDb" id="226186-BT_0548"/>
<dbReference type="EnsemblBacteria" id="AAO75655">
    <property type="protein sequence ID" value="AAO75655"/>
    <property type="gene ID" value="BT_0548"/>
</dbReference>
<dbReference type="GeneID" id="60926505"/>
<dbReference type="KEGG" id="bth:BT_0548"/>
<dbReference type="PATRIC" id="fig|226186.12.peg.548"/>
<dbReference type="eggNOG" id="COG0253">
    <property type="taxonomic scope" value="Bacteria"/>
</dbReference>
<dbReference type="HOGENOM" id="CLU_053306_3_0_10"/>
<dbReference type="InParanoid" id="Q8AAB7"/>
<dbReference type="OrthoDB" id="9805408at2"/>
<dbReference type="UniPathway" id="UPA00034">
    <property type="reaction ID" value="UER00025"/>
</dbReference>
<dbReference type="Proteomes" id="UP000001414">
    <property type="component" value="Chromosome"/>
</dbReference>
<dbReference type="GO" id="GO:0005829">
    <property type="term" value="C:cytosol"/>
    <property type="evidence" value="ECO:0000318"/>
    <property type="project" value="GO_Central"/>
</dbReference>
<dbReference type="GO" id="GO:0008837">
    <property type="term" value="F:diaminopimelate epimerase activity"/>
    <property type="evidence" value="ECO:0000318"/>
    <property type="project" value="GO_Central"/>
</dbReference>
<dbReference type="GO" id="GO:0009089">
    <property type="term" value="P:lysine biosynthetic process via diaminopimelate"/>
    <property type="evidence" value="ECO:0000318"/>
    <property type="project" value="GO_Central"/>
</dbReference>
<dbReference type="FunFam" id="3.10.310.10:FF:000001">
    <property type="entry name" value="Diaminopimelate epimerase"/>
    <property type="match status" value="1"/>
</dbReference>
<dbReference type="Gene3D" id="3.10.310.10">
    <property type="entry name" value="Diaminopimelate Epimerase, Chain A, domain 1"/>
    <property type="match status" value="2"/>
</dbReference>
<dbReference type="HAMAP" id="MF_00197">
    <property type="entry name" value="DAP_epimerase"/>
    <property type="match status" value="1"/>
</dbReference>
<dbReference type="InterPro" id="IPR018510">
    <property type="entry name" value="DAP_epimerase_AS"/>
</dbReference>
<dbReference type="InterPro" id="IPR001653">
    <property type="entry name" value="DAP_epimerase_DapF"/>
</dbReference>
<dbReference type="NCBIfam" id="TIGR00652">
    <property type="entry name" value="DapF"/>
    <property type="match status" value="1"/>
</dbReference>
<dbReference type="PANTHER" id="PTHR31689:SF0">
    <property type="entry name" value="DIAMINOPIMELATE EPIMERASE"/>
    <property type="match status" value="1"/>
</dbReference>
<dbReference type="PANTHER" id="PTHR31689">
    <property type="entry name" value="DIAMINOPIMELATE EPIMERASE, CHLOROPLASTIC"/>
    <property type="match status" value="1"/>
</dbReference>
<dbReference type="Pfam" id="PF01678">
    <property type="entry name" value="DAP_epimerase"/>
    <property type="match status" value="2"/>
</dbReference>
<dbReference type="SUPFAM" id="SSF54506">
    <property type="entry name" value="Diaminopimelate epimerase-like"/>
    <property type="match status" value="2"/>
</dbReference>
<dbReference type="PROSITE" id="PS01326">
    <property type="entry name" value="DAP_EPIMERASE"/>
    <property type="match status" value="1"/>
</dbReference>
<reference key="1">
    <citation type="journal article" date="2003" name="Science">
        <title>A genomic view of the human-Bacteroides thetaiotaomicron symbiosis.</title>
        <authorList>
            <person name="Xu J."/>
            <person name="Bjursell M.K."/>
            <person name="Himrod J."/>
            <person name="Deng S."/>
            <person name="Carmichael L.K."/>
            <person name="Chiang H.C."/>
            <person name="Hooper L.V."/>
            <person name="Gordon J.I."/>
        </authorList>
    </citation>
    <scope>NUCLEOTIDE SEQUENCE [LARGE SCALE GENOMIC DNA]</scope>
    <source>
        <strain>ATCC 29148 / DSM 2079 / JCM 5827 / CCUG 10774 / NCTC 10582 / VPI-5482 / E50</strain>
    </source>
</reference>
<organism>
    <name type="scientific">Bacteroides thetaiotaomicron (strain ATCC 29148 / DSM 2079 / JCM 5827 / CCUG 10774 / NCTC 10582 / VPI-5482 / E50)</name>
    <dbReference type="NCBI Taxonomy" id="226186"/>
    <lineage>
        <taxon>Bacteria</taxon>
        <taxon>Pseudomonadati</taxon>
        <taxon>Bacteroidota</taxon>
        <taxon>Bacteroidia</taxon>
        <taxon>Bacteroidales</taxon>
        <taxon>Bacteroidaceae</taxon>
        <taxon>Bacteroides</taxon>
    </lineage>
</organism>
<feature type="chain" id="PRO_0000149821" description="Diaminopimelate epimerase">
    <location>
        <begin position="1"/>
        <end position="267"/>
    </location>
</feature>
<feature type="active site" description="Proton donor" evidence="1">
    <location>
        <position position="75"/>
    </location>
</feature>
<feature type="active site" description="Proton acceptor" evidence="1">
    <location>
        <position position="210"/>
    </location>
</feature>
<feature type="binding site" evidence="1">
    <location>
        <position position="15"/>
    </location>
    <ligand>
        <name>substrate</name>
    </ligand>
</feature>
<feature type="binding site" evidence="1">
    <location>
        <position position="66"/>
    </location>
    <ligand>
        <name>substrate</name>
    </ligand>
</feature>
<feature type="binding site" evidence="1">
    <location>
        <begin position="76"/>
        <end position="77"/>
    </location>
    <ligand>
        <name>substrate</name>
    </ligand>
</feature>
<feature type="binding site" evidence="1">
    <location>
        <position position="150"/>
    </location>
    <ligand>
        <name>substrate</name>
    </ligand>
</feature>
<feature type="binding site" evidence="1">
    <location>
        <position position="183"/>
    </location>
    <ligand>
        <name>substrate</name>
    </ligand>
</feature>
<feature type="binding site" evidence="1">
    <location>
        <begin position="201"/>
        <end position="202"/>
    </location>
    <ligand>
        <name>substrate</name>
    </ligand>
</feature>
<feature type="binding site" evidence="1">
    <location>
        <begin position="211"/>
        <end position="212"/>
    </location>
    <ligand>
        <name>substrate</name>
    </ligand>
</feature>
<feature type="site" description="Could be important to modulate the pK values of the two catalytic cysteine residues" evidence="1">
    <location>
        <position position="152"/>
    </location>
</feature>
<feature type="site" description="Could be important to modulate the pK values of the two catalytic cysteine residues" evidence="1">
    <location>
        <position position="201"/>
    </location>
</feature>
<proteinExistence type="inferred from homology"/>
<keyword id="KW-0028">Amino-acid biosynthesis</keyword>
<keyword id="KW-0963">Cytoplasm</keyword>
<keyword id="KW-0413">Isomerase</keyword>
<keyword id="KW-0457">Lysine biosynthesis</keyword>
<keyword id="KW-1185">Reference proteome</keyword>
<name>DAPF_BACTN</name>
<sequence>MTTKIKFTKMHGAGNDYIYVDTTRYPIAAPEKKAIEWSKFHTGIGSDGLILIGSSDKADFSMRIFNADGSEAMMCGNGSRCVGKYVYEYGLTAKKEITLDTRSGIKVLKLHVEGGKVTAVTVDMGSPLETEAVDFGDQFPFQSTRVSMGNPHLVTFVEDITQINLPEIGPQLENYHLFPDRTNVEFAQIVGKDTIRMRVWERGSGITQACGTGACATAVAAVLHGLAGRKCDIIMDGGTVTIEWEEATGHILMTGPATKVFDGEMEG</sequence>
<comment type="function">
    <text evidence="1">Catalyzes the stereoinversion of LL-2,6-diaminopimelate (L,L-DAP) to meso-diaminopimelate (meso-DAP), a precursor of L-lysine and an essential component of the bacterial peptidoglycan.</text>
</comment>
<comment type="catalytic activity">
    <reaction evidence="1">
        <text>(2S,6S)-2,6-diaminopimelate = meso-2,6-diaminopimelate</text>
        <dbReference type="Rhea" id="RHEA:15393"/>
        <dbReference type="ChEBI" id="CHEBI:57609"/>
        <dbReference type="ChEBI" id="CHEBI:57791"/>
        <dbReference type="EC" id="5.1.1.7"/>
    </reaction>
</comment>
<comment type="pathway">
    <text evidence="1">Amino-acid biosynthesis; L-lysine biosynthesis via DAP pathway; DL-2,6-diaminopimelate from LL-2,6-diaminopimelate: step 1/1.</text>
</comment>
<comment type="subunit">
    <text evidence="1">Homodimer.</text>
</comment>
<comment type="subcellular location">
    <subcellularLocation>
        <location evidence="1">Cytoplasm</location>
    </subcellularLocation>
</comment>
<comment type="similarity">
    <text evidence="1">Belongs to the diaminopimelate epimerase family.</text>
</comment>
<accession>Q8AAB7</accession>
<protein>
    <recommendedName>
        <fullName evidence="1">Diaminopimelate epimerase</fullName>
        <shortName evidence="1">DAP epimerase</shortName>
        <ecNumber evidence="1">5.1.1.7</ecNumber>
    </recommendedName>
    <alternativeName>
        <fullName evidence="1">PLP-independent amino acid racemase</fullName>
    </alternativeName>
</protein>